<evidence type="ECO:0000255" key="1">
    <source>
        <dbReference type="HAMAP-Rule" id="MF_03035"/>
    </source>
</evidence>
<evidence type="ECO:0000305" key="2"/>
<reference key="1">
    <citation type="journal article" date="2004" name="Nature">
        <title>Genome evolution in yeasts.</title>
        <authorList>
            <person name="Dujon B."/>
            <person name="Sherman D."/>
            <person name="Fischer G."/>
            <person name="Durrens P."/>
            <person name="Casaregola S."/>
            <person name="Lafontaine I."/>
            <person name="de Montigny J."/>
            <person name="Marck C."/>
            <person name="Neuveglise C."/>
            <person name="Talla E."/>
            <person name="Goffard N."/>
            <person name="Frangeul L."/>
            <person name="Aigle M."/>
            <person name="Anthouard V."/>
            <person name="Babour A."/>
            <person name="Barbe V."/>
            <person name="Barnay S."/>
            <person name="Blanchin S."/>
            <person name="Beckerich J.-M."/>
            <person name="Beyne E."/>
            <person name="Bleykasten C."/>
            <person name="Boisrame A."/>
            <person name="Boyer J."/>
            <person name="Cattolico L."/>
            <person name="Confanioleri F."/>
            <person name="de Daruvar A."/>
            <person name="Despons L."/>
            <person name="Fabre E."/>
            <person name="Fairhead C."/>
            <person name="Ferry-Dumazet H."/>
            <person name="Groppi A."/>
            <person name="Hantraye F."/>
            <person name="Hennequin C."/>
            <person name="Jauniaux N."/>
            <person name="Joyet P."/>
            <person name="Kachouri R."/>
            <person name="Kerrest A."/>
            <person name="Koszul R."/>
            <person name="Lemaire M."/>
            <person name="Lesur I."/>
            <person name="Ma L."/>
            <person name="Muller H."/>
            <person name="Nicaud J.-M."/>
            <person name="Nikolski M."/>
            <person name="Oztas S."/>
            <person name="Ozier-Kalogeropoulos O."/>
            <person name="Pellenz S."/>
            <person name="Potier S."/>
            <person name="Richard G.-F."/>
            <person name="Straub M.-L."/>
            <person name="Suleau A."/>
            <person name="Swennen D."/>
            <person name="Tekaia F."/>
            <person name="Wesolowski-Louvel M."/>
            <person name="Westhof E."/>
            <person name="Wirth B."/>
            <person name="Zeniou-Meyer M."/>
            <person name="Zivanovic Y."/>
            <person name="Bolotin-Fukuhara M."/>
            <person name="Thierry A."/>
            <person name="Bouchier C."/>
            <person name="Caudron B."/>
            <person name="Scarpelli C."/>
            <person name="Gaillardin C."/>
            <person name="Weissenbach J."/>
            <person name="Wincker P."/>
            <person name="Souciet J.-L."/>
        </authorList>
    </citation>
    <scope>NUCLEOTIDE SEQUENCE [LARGE SCALE GENOMIC DNA]</scope>
    <source>
        <strain>ATCC 36239 / CBS 767 / BCRC 21394 / JCM 1990 / NBRC 0083 / IGC 2968</strain>
    </source>
</reference>
<gene>
    <name evidence="1" type="primary">CLP1</name>
    <name type="ordered locus">DEHA2C12562g</name>
</gene>
<proteinExistence type="inferred from homology"/>
<feature type="chain" id="PRO_0000375204" description="mRNA cleavage and polyadenylation factor CLP1">
    <location>
        <begin position="1"/>
        <end position="497"/>
    </location>
</feature>
<feature type="binding site" evidence="1">
    <location>
        <position position="34"/>
    </location>
    <ligand>
        <name>ATP</name>
        <dbReference type="ChEBI" id="CHEBI:30616"/>
    </ligand>
</feature>
<feature type="binding site" evidence="1">
    <location>
        <position position="73"/>
    </location>
    <ligand>
        <name>ATP</name>
        <dbReference type="ChEBI" id="CHEBI:30616"/>
    </ligand>
</feature>
<feature type="binding site" evidence="1">
    <location>
        <begin position="157"/>
        <end position="162"/>
    </location>
    <ligand>
        <name>ATP</name>
        <dbReference type="ChEBI" id="CHEBI:30616"/>
    </ligand>
</feature>
<comment type="function">
    <text evidence="1">Required for endonucleolytic cleavage during polyadenylation-dependent pre-mRNA 3'-end formation.</text>
</comment>
<comment type="subunit">
    <text evidence="1">Component of a pre-mRNA cleavage factor complex. Interacts directly with PCF11.</text>
</comment>
<comment type="subcellular location">
    <subcellularLocation>
        <location evidence="1">Nucleus</location>
    </subcellularLocation>
</comment>
<comment type="similarity">
    <text evidence="1">Belongs to the Clp1 family. Clp1 subfamily.</text>
</comment>
<comment type="caution">
    <text evidence="2">May lack the polyribonucleotide 5'-hydroxyl-kinase and polynucleotide 5'-hydroxyl-kinase activities that are characteristic of the human ortholog.</text>
</comment>
<name>CLP1_DEBHA</name>
<accession>Q6BU98</accession>
<dbReference type="EMBL" id="CR382135">
    <property type="protein sequence ID" value="CAG86297.2"/>
    <property type="molecule type" value="Genomic_DNA"/>
</dbReference>
<dbReference type="RefSeq" id="XP_458221.2">
    <property type="nucleotide sequence ID" value="XM_458221.1"/>
</dbReference>
<dbReference type="SMR" id="Q6BU98"/>
<dbReference type="FunCoup" id="Q6BU98">
    <property type="interactions" value="850"/>
</dbReference>
<dbReference type="STRING" id="284592.Q6BU98"/>
<dbReference type="GeneID" id="2900386"/>
<dbReference type="KEGG" id="dha:DEHA2C12562g"/>
<dbReference type="VEuPathDB" id="FungiDB:DEHA2C12562g"/>
<dbReference type="eggNOG" id="KOG2749">
    <property type="taxonomic scope" value="Eukaryota"/>
</dbReference>
<dbReference type="HOGENOM" id="CLU_018195_3_0_1"/>
<dbReference type="InParanoid" id="Q6BU98"/>
<dbReference type="OMA" id="VQYVNCH"/>
<dbReference type="OrthoDB" id="258143at2759"/>
<dbReference type="Proteomes" id="UP000000599">
    <property type="component" value="Chromosome C"/>
</dbReference>
<dbReference type="GO" id="GO:0005849">
    <property type="term" value="C:mRNA cleavage factor complex"/>
    <property type="evidence" value="ECO:0007669"/>
    <property type="project" value="UniProtKB-UniRule"/>
</dbReference>
<dbReference type="GO" id="GO:0005524">
    <property type="term" value="F:ATP binding"/>
    <property type="evidence" value="ECO:0007669"/>
    <property type="project" value="UniProtKB-UniRule"/>
</dbReference>
<dbReference type="GO" id="GO:0051731">
    <property type="term" value="F:polynucleotide 5'-hydroxyl-kinase activity"/>
    <property type="evidence" value="ECO:0007669"/>
    <property type="project" value="InterPro"/>
</dbReference>
<dbReference type="GO" id="GO:0003723">
    <property type="term" value="F:RNA binding"/>
    <property type="evidence" value="ECO:0007669"/>
    <property type="project" value="EnsemblFungi"/>
</dbReference>
<dbReference type="GO" id="GO:0031124">
    <property type="term" value="P:mRNA 3'-end processing"/>
    <property type="evidence" value="ECO:0007669"/>
    <property type="project" value="UniProtKB-UniRule"/>
</dbReference>
<dbReference type="GO" id="GO:0006388">
    <property type="term" value="P:tRNA splicing, via endonucleolytic cleavage and ligation"/>
    <property type="evidence" value="ECO:0007669"/>
    <property type="project" value="TreeGrafter"/>
</dbReference>
<dbReference type="Gene3D" id="2.60.120.1030">
    <property type="entry name" value="Clp1, DNA binding domain"/>
    <property type="match status" value="1"/>
</dbReference>
<dbReference type="Gene3D" id="3.40.50.300">
    <property type="entry name" value="P-loop containing nucleotide triphosphate hydrolases"/>
    <property type="match status" value="1"/>
</dbReference>
<dbReference type="Gene3D" id="2.40.30.330">
    <property type="entry name" value="Pre-mRNA cleavage complex subunit Clp1, C-terminal domain"/>
    <property type="match status" value="1"/>
</dbReference>
<dbReference type="HAMAP" id="MF_03035">
    <property type="entry name" value="Clp1"/>
    <property type="match status" value="1"/>
</dbReference>
<dbReference type="InterPro" id="IPR028606">
    <property type="entry name" value="Clp1"/>
</dbReference>
<dbReference type="InterPro" id="IPR045116">
    <property type="entry name" value="Clp1/Grc3"/>
</dbReference>
<dbReference type="InterPro" id="IPR010655">
    <property type="entry name" value="Clp1_C"/>
</dbReference>
<dbReference type="InterPro" id="IPR038238">
    <property type="entry name" value="Clp1_C_sf"/>
</dbReference>
<dbReference type="InterPro" id="IPR032324">
    <property type="entry name" value="Clp1_N"/>
</dbReference>
<dbReference type="InterPro" id="IPR038239">
    <property type="entry name" value="Clp1_N_sf"/>
</dbReference>
<dbReference type="InterPro" id="IPR032319">
    <property type="entry name" value="CLP1_P"/>
</dbReference>
<dbReference type="InterPro" id="IPR027417">
    <property type="entry name" value="P-loop_NTPase"/>
</dbReference>
<dbReference type="PANTHER" id="PTHR12755">
    <property type="entry name" value="CLEAVAGE/POLYADENYLATION FACTOR IA SUBUNIT CLP1P"/>
    <property type="match status" value="1"/>
</dbReference>
<dbReference type="PANTHER" id="PTHR12755:SF6">
    <property type="entry name" value="POLYRIBONUCLEOTIDE 5'-HYDROXYL-KINASE CLP1"/>
    <property type="match status" value="1"/>
</dbReference>
<dbReference type="Pfam" id="PF06807">
    <property type="entry name" value="Clp1"/>
    <property type="match status" value="1"/>
</dbReference>
<dbReference type="Pfam" id="PF16573">
    <property type="entry name" value="CLP1_N"/>
    <property type="match status" value="1"/>
</dbReference>
<dbReference type="Pfam" id="PF16575">
    <property type="entry name" value="CLP1_P"/>
    <property type="match status" value="1"/>
</dbReference>
<sequence>MSAIPGFGGDLNSNIDEDSNLNKSSVVEINGQSEWRFEVPFRTIMKLKVVNGIGEIFGTELPLNVEISLTGVKYAIYAPLDEGCKVEYYCVSNKANSTSTNEDDEISEYISEETSMNHYMNLHFALESYRQSISEHNFVNSSSQKTGPRVLVVGNRHSGKTSLVKTLASYGCKMDRSPILVNLNPRDGVFSVPGSLTATPISDAFDLESVNGWGGSTTSGSTFHNPKQPLVKNYGFTSHSDNLDLYKYQISKLGVAVVSRMEEDIAVKNSGLLIDTPPLSIKDFTIIENIVSDFEVNIIVVIGNERLLIDLKKKFKHKIASSQLDFVKVPKSGGVIEVDDAYIRKSQEESIKEYFNGTIRSPLSPFKTELDAKDFVIYKCVDSSEANSNLSFLPSGDSFTPEASEMSDGDKKEEFSLDTYYSQLQEPSSSNLDNSIVAITQLPQNNKSARDLMNTCVLGYAHVSKFDDTKSKMKVLLPFPGALPRNILISTSVGYTE</sequence>
<organism>
    <name type="scientific">Debaryomyces hansenii (strain ATCC 36239 / CBS 767 / BCRC 21394 / JCM 1990 / NBRC 0083 / IGC 2968)</name>
    <name type="common">Yeast</name>
    <name type="synonym">Torulaspora hansenii</name>
    <dbReference type="NCBI Taxonomy" id="284592"/>
    <lineage>
        <taxon>Eukaryota</taxon>
        <taxon>Fungi</taxon>
        <taxon>Dikarya</taxon>
        <taxon>Ascomycota</taxon>
        <taxon>Saccharomycotina</taxon>
        <taxon>Pichiomycetes</taxon>
        <taxon>Debaryomycetaceae</taxon>
        <taxon>Debaryomyces</taxon>
    </lineage>
</organism>
<protein>
    <recommendedName>
        <fullName evidence="1">mRNA cleavage and polyadenylation factor CLP1</fullName>
    </recommendedName>
</protein>
<keyword id="KW-0067">ATP-binding</keyword>
<keyword id="KW-0507">mRNA processing</keyword>
<keyword id="KW-0547">Nucleotide-binding</keyword>
<keyword id="KW-0539">Nucleus</keyword>
<keyword id="KW-1185">Reference proteome</keyword>